<dbReference type="EMBL" id="BX293980">
    <property type="protein sequence ID" value="CAE77553.1"/>
    <property type="molecule type" value="Genomic_DNA"/>
</dbReference>
<dbReference type="RefSeq" id="NP_975911.1">
    <property type="nucleotide sequence ID" value="NC_005364.2"/>
</dbReference>
<dbReference type="SMR" id="Q6MS38"/>
<dbReference type="STRING" id="272632.MSC_0944"/>
<dbReference type="KEGG" id="mmy:MSC_0944"/>
<dbReference type="PATRIC" id="fig|272632.4.peg.1026"/>
<dbReference type="eggNOG" id="COG0556">
    <property type="taxonomic scope" value="Bacteria"/>
</dbReference>
<dbReference type="HOGENOM" id="CLU_009621_2_1_14"/>
<dbReference type="Proteomes" id="UP000001016">
    <property type="component" value="Chromosome"/>
</dbReference>
<dbReference type="GO" id="GO:0005737">
    <property type="term" value="C:cytoplasm"/>
    <property type="evidence" value="ECO:0007669"/>
    <property type="project" value="UniProtKB-SubCell"/>
</dbReference>
<dbReference type="GO" id="GO:0009380">
    <property type="term" value="C:excinuclease repair complex"/>
    <property type="evidence" value="ECO:0007669"/>
    <property type="project" value="InterPro"/>
</dbReference>
<dbReference type="GO" id="GO:0005524">
    <property type="term" value="F:ATP binding"/>
    <property type="evidence" value="ECO:0007669"/>
    <property type="project" value="UniProtKB-UniRule"/>
</dbReference>
<dbReference type="GO" id="GO:0016887">
    <property type="term" value="F:ATP hydrolysis activity"/>
    <property type="evidence" value="ECO:0007669"/>
    <property type="project" value="InterPro"/>
</dbReference>
<dbReference type="GO" id="GO:0003677">
    <property type="term" value="F:DNA binding"/>
    <property type="evidence" value="ECO:0007669"/>
    <property type="project" value="UniProtKB-UniRule"/>
</dbReference>
<dbReference type="GO" id="GO:0009381">
    <property type="term" value="F:excinuclease ABC activity"/>
    <property type="evidence" value="ECO:0007669"/>
    <property type="project" value="UniProtKB-UniRule"/>
</dbReference>
<dbReference type="GO" id="GO:0006289">
    <property type="term" value="P:nucleotide-excision repair"/>
    <property type="evidence" value="ECO:0007669"/>
    <property type="project" value="UniProtKB-UniRule"/>
</dbReference>
<dbReference type="GO" id="GO:0009432">
    <property type="term" value="P:SOS response"/>
    <property type="evidence" value="ECO:0007669"/>
    <property type="project" value="UniProtKB-UniRule"/>
</dbReference>
<dbReference type="CDD" id="cd17916">
    <property type="entry name" value="DEXHc_UvrB"/>
    <property type="match status" value="1"/>
</dbReference>
<dbReference type="CDD" id="cd18790">
    <property type="entry name" value="SF2_C_UvrB"/>
    <property type="match status" value="1"/>
</dbReference>
<dbReference type="Gene3D" id="3.40.50.300">
    <property type="entry name" value="P-loop containing nucleotide triphosphate hydrolases"/>
    <property type="match status" value="3"/>
</dbReference>
<dbReference type="Gene3D" id="4.10.860.10">
    <property type="entry name" value="UVR domain"/>
    <property type="match status" value="1"/>
</dbReference>
<dbReference type="HAMAP" id="MF_00204">
    <property type="entry name" value="UvrB"/>
    <property type="match status" value="1"/>
</dbReference>
<dbReference type="InterPro" id="IPR006935">
    <property type="entry name" value="Helicase/UvrB_N"/>
</dbReference>
<dbReference type="InterPro" id="IPR014001">
    <property type="entry name" value="Helicase_ATP-bd"/>
</dbReference>
<dbReference type="InterPro" id="IPR001650">
    <property type="entry name" value="Helicase_C-like"/>
</dbReference>
<dbReference type="InterPro" id="IPR027417">
    <property type="entry name" value="P-loop_NTPase"/>
</dbReference>
<dbReference type="InterPro" id="IPR001943">
    <property type="entry name" value="UVR_dom"/>
</dbReference>
<dbReference type="InterPro" id="IPR036876">
    <property type="entry name" value="UVR_dom_sf"/>
</dbReference>
<dbReference type="InterPro" id="IPR004807">
    <property type="entry name" value="UvrB"/>
</dbReference>
<dbReference type="InterPro" id="IPR041471">
    <property type="entry name" value="UvrB_inter"/>
</dbReference>
<dbReference type="InterPro" id="IPR024759">
    <property type="entry name" value="UvrB_YAD/RRR_dom"/>
</dbReference>
<dbReference type="NCBIfam" id="NF003673">
    <property type="entry name" value="PRK05298.1"/>
    <property type="match status" value="1"/>
</dbReference>
<dbReference type="NCBIfam" id="TIGR00631">
    <property type="entry name" value="uvrb"/>
    <property type="match status" value="1"/>
</dbReference>
<dbReference type="PANTHER" id="PTHR24029">
    <property type="entry name" value="UVRABC SYSTEM PROTEIN B"/>
    <property type="match status" value="1"/>
</dbReference>
<dbReference type="PANTHER" id="PTHR24029:SF0">
    <property type="entry name" value="UVRABC SYSTEM PROTEIN B"/>
    <property type="match status" value="1"/>
</dbReference>
<dbReference type="Pfam" id="PF00271">
    <property type="entry name" value="Helicase_C"/>
    <property type="match status" value="1"/>
</dbReference>
<dbReference type="Pfam" id="PF04851">
    <property type="entry name" value="ResIII"/>
    <property type="match status" value="1"/>
</dbReference>
<dbReference type="Pfam" id="PF02151">
    <property type="entry name" value="UVR"/>
    <property type="match status" value="1"/>
</dbReference>
<dbReference type="Pfam" id="PF12344">
    <property type="entry name" value="UvrB"/>
    <property type="match status" value="1"/>
</dbReference>
<dbReference type="Pfam" id="PF17757">
    <property type="entry name" value="UvrB_inter"/>
    <property type="match status" value="1"/>
</dbReference>
<dbReference type="SMART" id="SM00487">
    <property type="entry name" value="DEXDc"/>
    <property type="match status" value="1"/>
</dbReference>
<dbReference type="SMART" id="SM00490">
    <property type="entry name" value="HELICc"/>
    <property type="match status" value="1"/>
</dbReference>
<dbReference type="SUPFAM" id="SSF46600">
    <property type="entry name" value="C-terminal UvrC-binding domain of UvrB"/>
    <property type="match status" value="1"/>
</dbReference>
<dbReference type="SUPFAM" id="SSF52540">
    <property type="entry name" value="P-loop containing nucleoside triphosphate hydrolases"/>
    <property type="match status" value="2"/>
</dbReference>
<dbReference type="PROSITE" id="PS51192">
    <property type="entry name" value="HELICASE_ATP_BIND_1"/>
    <property type="match status" value="1"/>
</dbReference>
<dbReference type="PROSITE" id="PS51194">
    <property type="entry name" value="HELICASE_CTER"/>
    <property type="match status" value="1"/>
</dbReference>
<dbReference type="PROSITE" id="PS50151">
    <property type="entry name" value="UVR"/>
    <property type="match status" value="1"/>
</dbReference>
<accession>Q6MS38</accession>
<sequence>MLWEKVMFIANNKYKLVTKYKPSGDQNQAIEKLNKAIIENKKHQVLLGATGTGKTFTIANIIAKHNKQALVIAHNKTLAMQLYYELKEMFPENRVEYFVSNFDFFQPEAYIPSKDLYIDKDSRQNMELDMMRLSACNALLTRNDTIVVASVAALFALQNPLEYSSAFIELKVGQKIKRNELLTWLVRSGYTRNDIENQLGSFSAKGDVVKIVPGWVNNIMFRISLFDDEIESIHTLNTITNSILDNITTVTIHPAQSYITPQDKLKTICNNIRNELVQRLAELQSENKLLEAQRLEQRTKYDLESLEEFGFCSGIENYSSHLDFRSKGQRPYVLLDYFNNDFITIVDESHITLPQIRGMYNTDRSRKLTLVEYGFRLPSALDNRPLNFDEFNSLIKQVIYTSATPGDYELDLVNHQVVQQIIRPTGLLDPQIEIRKTTNQIDDIINEIHLRKLQNERVFITTLTIRMSEDLTAFLQEKNIKVAYLHSELKTLERSEILNDLRKGVYDVVVGVNLLREGLDLPEVSLVCILDADKQGFLRNYRSLIQTIGRVARNVNGKAIMYADTVSQAMDEAIKETNRRRKIQEEFNKKHNIVPKTISKAISESILSEQTKKTLAKAKKIKDKKQKLQTIQQTIDNLRQEMLQAAKELDFERAAILRDTIIELENEKNTN</sequence>
<organism>
    <name type="scientific">Mycoplasma mycoides subsp. mycoides SC (strain CCUG 32753 / NCTC 10114 / PG1)</name>
    <dbReference type="NCBI Taxonomy" id="272632"/>
    <lineage>
        <taxon>Bacteria</taxon>
        <taxon>Bacillati</taxon>
        <taxon>Mycoplasmatota</taxon>
        <taxon>Mollicutes</taxon>
        <taxon>Mycoplasmataceae</taxon>
        <taxon>Mycoplasma</taxon>
    </lineage>
</organism>
<name>UVRB_MYCMS</name>
<proteinExistence type="inferred from homology"/>
<comment type="function">
    <text evidence="1">The UvrABC repair system catalyzes the recognition and processing of DNA lesions. A damage recognition complex composed of 2 UvrA and 2 UvrB subunits scans DNA for abnormalities. Upon binding of the UvrA(2)B(2) complex to a putative damaged site, the DNA wraps around one UvrB monomer. DNA wrap is dependent on ATP binding by UvrB and probably causes local melting of the DNA helix, facilitating insertion of UvrB beta-hairpin between the DNA strands. Then UvrB probes one DNA strand for the presence of a lesion. If a lesion is found the UvrA subunits dissociate and the UvrB-DNA preincision complex is formed. This complex is subsequently bound by UvrC and the second UvrB is released. If no lesion is found, the DNA wraps around the other UvrB subunit that will check the other stand for damage.</text>
</comment>
<comment type="subunit">
    <text evidence="1">Forms a heterotetramer with UvrA during the search for lesions. Interacts with UvrC in an incision complex.</text>
</comment>
<comment type="subcellular location">
    <subcellularLocation>
        <location evidence="1">Cytoplasm</location>
    </subcellularLocation>
</comment>
<comment type="domain">
    <text evidence="1">The beta-hairpin motif is involved in DNA binding.</text>
</comment>
<comment type="similarity">
    <text evidence="1">Belongs to the UvrB family.</text>
</comment>
<protein>
    <recommendedName>
        <fullName evidence="1">UvrABC system protein B</fullName>
        <shortName evidence="1">Protein UvrB</shortName>
    </recommendedName>
    <alternativeName>
        <fullName evidence="1">Excinuclease ABC subunit B</fullName>
    </alternativeName>
</protein>
<feature type="chain" id="PRO_0000227330" description="UvrABC system protein B">
    <location>
        <begin position="1"/>
        <end position="671"/>
    </location>
</feature>
<feature type="domain" description="Helicase ATP-binding" evidence="1">
    <location>
        <begin position="35"/>
        <end position="423"/>
    </location>
</feature>
<feature type="domain" description="Helicase C-terminal" evidence="1">
    <location>
        <begin position="440"/>
        <end position="602"/>
    </location>
</feature>
<feature type="domain" description="UVR" evidence="1">
    <location>
        <begin position="632"/>
        <end position="667"/>
    </location>
</feature>
<feature type="short sequence motif" description="Beta-hairpin">
    <location>
        <begin position="101"/>
        <end position="124"/>
    </location>
</feature>
<feature type="binding site" evidence="1">
    <location>
        <begin position="48"/>
        <end position="55"/>
    </location>
    <ligand>
        <name>ATP</name>
        <dbReference type="ChEBI" id="CHEBI:30616"/>
    </ligand>
</feature>
<keyword id="KW-0067">ATP-binding</keyword>
<keyword id="KW-0963">Cytoplasm</keyword>
<keyword id="KW-0227">DNA damage</keyword>
<keyword id="KW-0228">DNA excision</keyword>
<keyword id="KW-0234">DNA repair</keyword>
<keyword id="KW-0267">Excision nuclease</keyword>
<keyword id="KW-0547">Nucleotide-binding</keyword>
<keyword id="KW-1185">Reference proteome</keyword>
<keyword id="KW-0742">SOS response</keyword>
<evidence type="ECO:0000255" key="1">
    <source>
        <dbReference type="HAMAP-Rule" id="MF_00204"/>
    </source>
</evidence>
<gene>
    <name evidence="1" type="primary">uvrB</name>
    <name type="ordered locus">MSC_0944</name>
</gene>
<reference key="1">
    <citation type="journal article" date="2004" name="Genome Res.">
        <title>The genome sequence of Mycoplasma mycoides subsp. mycoides SC type strain PG1T, the causative agent of contagious bovine pleuropneumonia (CBPP).</title>
        <authorList>
            <person name="Westberg J."/>
            <person name="Persson A."/>
            <person name="Holmberg A."/>
            <person name="Goesmann A."/>
            <person name="Lundeberg J."/>
            <person name="Johansson K.-E."/>
            <person name="Pettersson B."/>
            <person name="Uhlen M."/>
        </authorList>
    </citation>
    <scope>NUCLEOTIDE SEQUENCE [LARGE SCALE GENOMIC DNA]</scope>
    <source>
        <strain>CCUG 32753 / NCTC 10114 / PG1</strain>
    </source>
</reference>